<proteinExistence type="evidence at transcript level"/>
<accession>Q85A51</accession>
<evidence type="ECO:0000255" key="1">
    <source>
        <dbReference type="HAMAP-Rule" id="MF_01391"/>
    </source>
</evidence>
<evidence type="ECO:0000269" key="2">
    <source>
    </source>
</evidence>
<evidence type="ECO:0000269" key="3">
    <source>
    </source>
</evidence>
<comment type="function">
    <text evidence="1">Required during biogenesis of c-type cytochromes (cytochrome c6 and cytochrome f) at the step of heme attachment.</text>
</comment>
<comment type="subunit">
    <text evidence="1">May interact with Ccs1.</text>
</comment>
<comment type="subcellular location">
    <subcellularLocation>
        <location evidence="1">Plastid</location>
        <location evidence="1">Chloroplast thylakoid membrane</location>
        <topology evidence="1">Multi-pass membrane protein</topology>
    </subcellularLocation>
</comment>
<comment type="RNA editing">
    <location>
        <position position="1" evidence="2 3"/>
    </location>
    <location>
        <position position="14" evidence="2 3"/>
    </location>
    <location>
        <position position="60" evidence="2 3"/>
    </location>
    <location>
        <position position="63" evidence="2 3"/>
    </location>
    <location>
        <position position="131" evidence="2 3"/>
    </location>
    <location>
        <position position="161" evidence="2 3"/>
    </location>
    <location>
        <position position="238" evidence="2 3"/>
    </location>
    <location>
        <position position="239" evidence="2 3"/>
    </location>
    <location>
        <position position="253" evidence="2 3"/>
    </location>
    <text>The initiator methionine is created by RNA editing. The nonsense codons at positions 238 and 239 are modified to sense codons.</text>
</comment>
<comment type="similarity">
    <text evidence="1">Belongs to the CcmF/CycK/Ccl1/NrfE/CcsA family.</text>
</comment>
<keyword id="KW-0150">Chloroplast</keyword>
<keyword id="KW-0201">Cytochrome c-type biogenesis</keyword>
<keyword id="KW-0472">Membrane</keyword>
<keyword id="KW-0934">Plastid</keyword>
<keyword id="KW-0691">RNA editing</keyword>
<keyword id="KW-0793">Thylakoid</keyword>
<keyword id="KW-0812">Transmembrane</keyword>
<keyword id="KW-1133">Transmembrane helix</keyword>
<organism>
    <name type="scientific">Anthoceros angustus</name>
    <name type="common">Hornwort</name>
    <name type="synonym">Anthoceros formosae</name>
    <dbReference type="NCBI Taxonomy" id="48387"/>
    <lineage>
        <taxon>Eukaryota</taxon>
        <taxon>Viridiplantae</taxon>
        <taxon>Streptophyta</taxon>
        <taxon>Embryophyta</taxon>
        <taxon>Anthocerotophyta</taxon>
        <taxon>Anthocerotopsida</taxon>
        <taxon>Anthocerotidae</taxon>
        <taxon>Anthocerotales</taxon>
        <taxon>Anthocerotaceae</taxon>
        <taxon>Anthoceros</taxon>
    </lineage>
</organism>
<geneLocation type="chloroplast"/>
<reference key="1">
    <citation type="journal article" date="2003" name="Nucleic Acids Res.">
        <title>The complete nucleotide sequence of the hornwort (Anthoceros formosae) chloroplast genome: insight into the earliest land plants.</title>
        <authorList>
            <person name="Kugita M."/>
            <person name="Kaneko A."/>
            <person name="Yamamoto Y."/>
            <person name="Takeya Y."/>
            <person name="Matsumoto T."/>
            <person name="Yoshinaga K."/>
        </authorList>
    </citation>
    <scope>NUCLEOTIDE SEQUENCE [LARGE SCALE GENOMIC DNA]</scope>
    <scope>RNA EDITING</scope>
</reference>
<reference key="2">
    <citation type="journal article" date="2003" name="Nucleic Acids Res.">
        <title>RNA editing in hornwort chloroplasts makes more than half the genes functional.</title>
        <authorList>
            <person name="Kugita M."/>
            <person name="Yamamoto Y."/>
            <person name="Fujikawa T."/>
            <person name="Matsumoto T."/>
            <person name="Yoshinaga K."/>
        </authorList>
    </citation>
    <scope>NUCLEOTIDE SEQUENCE [MRNA]</scope>
    <scope>RNA EDITING</scope>
    <source>
        <tissue>Thallus</tissue>
    </source>
</reference>
<protein>
    <recommendedName>
        <fullName evidence="1">Cytochrome c biogenesis protein CcsA</fullName>
    </recommendedName>
</protein>
<gene>
    <name evidence="1" type="primary">ccsA</name>
</gene>
<sequence length="339" mass="38304">MILINLEHILAHISFFLPFLATLVFWGRIVCIDNKRIGSLGNKSIIIAYICITGLLLTRWFHSRHLLLSNLYESFMFLSWSFCLIHIVSEIGSKNDWLGIIIVLIAMLTHGFATVGLPIEMQQSTVLVPALQSHWLIMHVSMMIPSYATLPCGSLLVIALLITTLNKNKNFPILKFNVNSFIWSLILEKKFYLGGSGGDISSRNSSSGNGSDNDSNNNNNKKTFHSLSIDCRKLQLTQQLDYWSYRIISLGSLFLTIGILSGAVWVNEAWGSYWSWDPKETWALITWLLSAIHIHIRMIRGWQGEKPAIIASSGSSIVWFRYLGVNSPEKGLHSYGWLN</sequence>
<feature type="chain" id="PRO_0000201597" description="Cytochrome c biogenesis protein CcsA">
    <location>
        <begin position="1"/>
        <end position="339"/>
    </location>
</feature>
<feature type="transmembrane region" description="Helical" evidence="1">
    <location>
        <begin position="6"/>
        <end position="26"/>
    </location>
</feature>
<feature type="transmembrane region" description="Helical" evidence="1">
    <location>
        <begin position="37"/>
        <end position="57"/>
    </location>
</feature>
<feature type="transmembrane region" description="Helical" evidence="1">
    <location>
        <begin position="71"/>
        <end position="91"/>
    </location>
</feature>
<feature type="transmembrane region" description="Helical" evidence="1">
    <location>
        <begin position="97"/>
        <end position="117"/>
    </location>
</feature>
<feature type="transmembrane region" description="Helical" evidence="1">
    <location>
        <begin position="142"/>
        <end position="162"/>
    </location>
</feature>
<feature type="transmembrane region" description="Helical" evidence="1">
    <location>
        <begin position="247"/>
        <end position="267"/>
    </location>
</feature>
<feature type="transmembrane region" description="Helical" evidence="1">
    <location>
        <begin position="281"/>
        <end position="299"/>
    </location>
</feature>
<dbReference type="EMBL" id="AB086179">
    <property type="protein sequence ID" value="BAC55400.1"/>
    <property type="molecule type" value="Genomic_DNA"/>
</dbReference>
<dbReference type="EMBL" id="AB087484">
    <property type="protein sequence ID" value="BAC55500.1"/>
    <property type="molecule type" value="mRNA"/>
</dbReference>
<dbReference type="RefSeq" id="NP_777463.1">
    <property type="nucleotide sequence ID" value="NC_004543.1"/>
</dbReference>
<dbReference type="SMR" id="Q85A51"/>
<dbReference type="GeneID" id="2553486"/>
<dbReference type="GO" id="GO:0009535">
    <property type="term" value="C:chloroplast thylakoid membrane"/>
    <property type="evidence" value="ECO:0007669"/>
    <property type="project" value="UniProtKB-SubCell"/>
</dbReference>
<dbReference type="GO" id="GO:0005886">
    <property type="term" value="C:plasma membrane"/>
    <property type="evidence" value="ECO:0007669"/>
    <property type="project" value="TreeGrafter"/>
</dbReference>
<dbReference type="GO" id="GO:0020037">
    <property type="term" value="F:heme binding"/>
    <property type="evidence" value="ECO:0007669"/>
    <property type="project" value="InterPro"/>
</dbReference>
<dbReference type="GO" id="GO:0017004">
    <property type="term" value="P:cytochrome complex assembly"/>
    <property type="evidence" value="ECO:0007669"/>
    <property type="project" value="UniProtKB-UniRule"/>
</dbReference>
<dbReference type="HAMAP" id="MF_01391">
    <property type="entry name" value="CytC_CcsA"/>
    <property type="match status" value="1"/>
</dbReference>
<dbReference type="InterPro" id="IPR002541">
    <property type="entry name" value="Cyt_c_assembly"/>
</dbReference>
<dbReference type="InterPro" id="IPR017562">
    <property type="entry name" value="Cyt_c_biogenesis_CcsA"/>
</dbReference>
<dbReference type="InterPro" id="IPR045062">
    <property type="entry name" value="Cyt_c_biogenesis_CcsA/CcmC"/>
</dbReference>
<dbReference type="NCBIfam" id="TIGR03144">
    <property type="entry name" value="cytochr_II_ccsB"/>
    <property type="match status" value="1"/>
</dbReference>
<dbReference type="PANTHER" id="PTHR30071:SF1">
    <property type="entry name" value="CYTOCHROME B_B6 PROTEIN-RELATED"/>
    <property type="match status" value="1"/>
</dbReference>
<dbReference type="PANTHER" id="PTHR30071">
    <property type="entry name" value="HEME EXPORTER PROTEIN C"/>
    <property type="match status" value="1"/>
</dbReference>
<dbReference type="Pfam" id="PF01578">
    <property type="entry name" value="Cytochrom_C_asm"/>
    <property type="match status" value="1"/>
</dbReference>
<name>CCSA_ANTAG</name>